<organism>
    <name type="scientific">Cereibacter sphaeroides (strain ATCC 17025 / ATH 2.4.3)</name>
    <name type="common">Rhodobacter sphaeroides</name>
    <dbReference type="NCBI Taxonomy" id="349102"/>
    <lineage>
        <taxon>Bacteria</taxon>
        <taxon>Pseudomonadati</taxon>
        <taxon>Pseudomonadota</taxon>
        <taxon>Alphaproteobacteria</taxon>
        <taxon>Rhodobacterales</taxon>
        <taxon>Paracoccaceae</taxon>
        <taxon>Cereibacter</taxon>
    </lineage>
</organism>
<proteinExistence type="inferred from homology"/>
<evidence type="ECO:0000255" key="1">
    <source>
        <dbReference type="HAMAP-Rule" id="MF_00529"/>
    </source>
</evidence>
<keyword id="KW-0535">Nitrogen fixation</keyword>
<name>NIFW_CERS5</name>
<sequence>MTTGTAVLEELRRLSAAEEIFDALEHPYRPEVVNVSRLHIMKRFGQYLAAIDFTPLGAADARAAARDALSRAYTDFVDSSPLEQKVFKVFAKPSRAFVPLTGLSIVED</sequence>
<protein>
    <recommendedName>
        <fullName evidence="1">Nitrogenase-stabilizing/protective protein NifW</fullName>
    </recommendedName>
</protein>
<comment type="function">
    <text evidence="1">May protect the nitrogenase Fe-Mo protein from oxidative damage.</text>
</comment>
<comment type="subunit">
    <text evidence="1">Homotrimer; associates with NifD.</text>
</comment>
<comment type="similarity">
    <text evidence="1">Belongs to the NifW family.</text>
</comment>
<gene>
    <name evidence="1" type="primary">nifW</name>
    <name type="ordered locus">Rsph17025_1259</name>
</gene>
<reference key="1">
    <citation type="submission" date="2007-04" db="EMBL/GenBank/DDBJ databases">
        <title>Complete sequence of chromosome of Rhodobacter sphaeroides ATCC 17025.</title>
        <authorList>
            <consortium name="US DOE Joint Genome Institute"/>
            <person name="Copeland A."/>
            <person name="Lucas S."/>
            <person name="Lapidus A."/>
            <person name="Barry K."/>
            <person name="Detter J.C."/>
            <person name="Glavina del Rio T."/>
            <person name="Hammon N."/>
            <person name="Israni S."/>
            <person name="Dalin E."/>
            <person name="Tice H."/>
            <person name="Pitluck S."/>
            <person name="Chertkov O."/>
            <person name="Brettin T."/>
            <person name="Bruce D."/>
            <person name="Han C."/>
            <person name="Schmutz J."/>
            <person name="Larimer F."/>
            <person name="Land M."/>
            <person name="Hauser L."/>
            <person name="Kyrpides N."/>
            <person name="Kim E."/>
            <person name="Richardson P."/>
            <person name="Mackenzie C."/>
            <person name="Choudhary M."/>
            <person name="Donohue T.J."/>
            <person name="Kaplan S."/>
        </authorList>
    </citation>
    <scope>NUCLEOTIDE SEQUENCE [LARGE SCALE GENOMIC DNA]</scope>
    <source>
        <strain>ATCC 17025 / ATH 2.4.3</strain>
    </source>
</reference>
<feature type="chain" id="PRO_1000060973" description="Nitrogenase-stabilizing/protective protein NifW">
    <location>
        <begin position="1"/>
        <end position="108"/>
    </location>
</feature>
<dbReference type="EMBL" id="CP000661">
    <property type="protein sequence ID" value="ABP70160.1"/>
    <property type="molecule type" value="Genomic_DNA"/>
</dbReference>
<dbReference type="STRING" id="349102.Rsph17025_1259"/>
<dbReference type="KEGG" id="rsq:Rsph17025_1259"/>
<dbReference type="eggNOG" id="ENOG50330W8">
    <property type="taxonomic scope" value="Bacteria"/>
</dbReference>
<dbReference type="HOGENOM" id="CLU_145318_0_0_5"/>
<dbReference type="BioCyc" id="RSPH349102:G1G8M-1288-MONOMER"/>
<dbReference type="GO" id="GO:0009399">
    <property type="term" value="P:nitrogen fixation"/>
    <property type="evidence" value="ECO:0007669"/>
    <property type="project" value="UniProtKB-UniRule"/>
</dbReference>
<dbReference type="HAMAP" id="MF_00529">
    <property type="entry name" value="NifW"/>
    <property type="match status" value="1"/>
</dbReference>
<dbReference type="InterPro" id="IPR004893">
    <property type="entry name" value="NifW"/>
</dbReference>
<dbReference type="NCBIfam" id="NF002009">
    <property type="entry name" value="PRK00810.1"/>
    <property type="match status" value="1"/>
</dbReference>
<dbReference type="Pfam" id="PF03206">
    <property type="entry name" value="NifW"/>
    <property type="match status" value="1"/>
</dbReference>
<dbReference type="PIRSF" id="PIRSF005790">
    <property type="entry name" value="NifW"/>
    <property type="match status" value="1"/>
</dbReference>
<accession>A4WRZ6</accession>